<proteinExistence type="evidence at protein level"/>
<sequence>MSQGPPPGESSEPEAKVLHTKRLYRAVVEAVHRLDLILCNKAAYQEVFKPENVSLRNKLRELCVKLMFLHPVDYGRKAEELLWRKVYYEVIQLIKTNKKHIHSRSTLECAYRTHLVAGIGFYQHLLLYIQSHYQLELQCCIDWTHVTDPLMGFKKPVSASGKEMDWAQMACHRCLVYLGDLSRYQNELAGVDTELLAERFYYQALSVAPQIGMPFNQLGTLAGSKYYNVEAMYCYLRCIQSEVSFEGAYGNLKRLYDKAAKMYHQLKKSETRKLSPSKKRCKDIKRLLVNFMYLQSLLQPKSSSVDSELTSLCQSVLEDFNLCLFYLPSSPNLGLTNEDEEECESGYAFLPDLLIFQMAIICLMGVHSLKRAGSKHYSAAIAFTLALFSHLINHVNIRLQAELEEGENPVSAFQSDGTDEPESKEALEKEEPEPEPPTVVPQADEGRKSRKHSRLSCLRRRRRHHPPKAGDDSDLSEGFESDSSHDSAQASDGSDSGSDKSLEGRGTAFDAETDSEMNSQESRSDLEDMEDEEGTRSPAQEPPQARSEVPDSLNGPLGPSEASIASNLQAMSTQMFQTKRCFRLAPTFSNLLLQPTTEPNSVASHRPCVNGDMDKPLEPASEDGSESEGSESSNRSCRNERSLQEKLQALMAEGLLPAVKVFLDWLRTNPDLIIVCAQSSQSLWNRLSVLLNLLPASAELQDSGLALCSEVQGLLEGCELPDLPASLLLPEDMALRNLPPLRAAHRRFNFDADRPLLSALEESVVRICCIRSFGHFVARLQGSILQFNPEVGIFVSIAQSEQESLLQQAQAQFRMAEEEARRNRLMRDMAQLRLQLEVSQLEGSLQQPKAQSAMSPYLIPDTQALCYHLPLIRQLATSGRFIIIIPRTVIDGLDLLKKEQPGARDGIRYLEAEFKKGNRYIRCQKEVGKSFERHKLKRQDADAWTLYKILDSCRQLTLAQGAGEEDPSGMVTIITGLHLDSPSALSGPMQAALQAAAHASVDVKNVLDFYRQWKEIG</sequence>
<dbReference type="EMBL" id="AK129286">
    <property type="protein sequence ID" value="BAC98096.1"/>
    <property type="status" value="ALT_INIT"/>
    <property type="molecule type" value="mRNA"/>
</dbReference>
<dbReference type="EMBL" id="BC024683">
    <property type="protein sequence ID" value="AAH24683.3"/>
    <property type="molecule type" value="mRNA"/>
</dbReference>
<dbReference type="EMBL" id="BC100408">
    <property type="protein sequence ID" value="AAI00409.1"/>
    <property type="molecule type" value="mRNA"/>
</dbReference>
<dbReference type="CCDS" id="CCDS38480.1">
    <molecule id="Q6ZPY2-1"/>
</dbReference>
<dbReference type="RefSeq" id="NP_839977.2">
    <molecule id="Q6ZPY2-1"/>
    <property type="nucleotide sequence ID" value="NM_178246.3"/>
</dbReference>
<dbReference type="SMR" id="Q6ZPY2"/>
<dbReference type="BioGRID" id="230852">
    <property type="interactions" value="8"/>
</dbReference>
<dbReference type="FunCoup" id="Q6ZPY2">
    <property type="interactions" value="4562"/>
</dbReference>
<dbReference type="IntAct" id="Q6ZPY2">
    <property type="interactions" value="1"/>
</dbReference>
<dbReference type="MINT" id="Q6ZPY2"/>
<dbReference type="STRING" id="10090.ENSMUSP00000001451"/>
<dbReference type="iPTMnet" id="Q6ZPY2"/>
<dbReference type="PhosphoSitePlus" id="Q6ZPY2"/>
<dbReference type="PaxDb" id="10090-ENSMUSP00000001451"/>
<dbReference type="PeptideAtlas" id="Q6ZPY2"/>
<dbReference type="ProteomicsDB" id="257522">
    <molecule id="Q6ZPY2-1"/>
</dbReference>
<dbReference type="ProteomicsDB" id="257523">
    <molecule id="Q6ZPY2-2"/>
</dbReference>
<dbReference type="Pumba" id="Q6ZPY2"/>
<dbReference type="Antibodypedia" id="34209">
    <property type="antibodies" value="109 antibodies from 24 providers"/>
</dbReference>
<dbReference type="Ensembl" id="ENSMUST00000001451.11">
    <molecule id="Q6ZPY2-1"/>
    <property type="protein sequence ID" value="ENSMUSP00000001451.6"/>
    <property type="gene ID" value="ENSMUSG00000001415.11"/>
</dbReference>
<dbReference type="GeneID" id="229512"/>
<dbReference type="KEGG" id="mmu:229512"/>
<dbReference type="UCSC" id="uc008pus.1">
    <molecule id="Q6ZPY2-2"/>
    <property type="organism name" value="mouse"/>
</dbReference>
<dbReference type="UCSC" id="uc008put.1">
    <molecule id="Q6ZPY2-1"/>
    <property type="organism name" value="mouse"/>
</dbReference>
<dbReference type="AGR" id="MGI:2447364"/>
<dbReference type="CTD" id="23381"/>
<dbReference type="MGI" id="MGI:2447364">
    <property type="gene designation" value="Smg5"/>
</dbReference>
<dbReference type="VEuPathDB" id="HostDB:ENSMUSG00000001415"/>
<dbReference type="eggNOG" id="KOG2162">
    <property type="taxonomic scope" value="Eukaryota"/>
</dbReference>
<dbReference type="GeneTree" id="ENSGT00940000154566"/>
<dbReference type="HOGENOM" id="CLU_011872_0_0_1"/>
<dbReference type="InParanoid" id="Q6ZPY2"/>
<dbReference type="OMA" id="CLMSISR"/>
<dbReference type="OrthoDB" id="5920073at2759"/>
<dbReference type="PhylomeDB" id="Q6ZPY2"/>
<dbReference type="TreeFam" id="TF327119"/>
<dbReference type="Reactome" id="R-MMU-975957">
    <property type="pathway name" value="Nonsense Mediated Decay (NMD) enhanced by the Exon Junction Complex (EJC)"/>
</dbReference>
<dbReference type="BioGRID-ORCS" id="229512">
    <property type="hits" value="25 hits in 82 CRISPR screens"/>
</dbReference>
<dbReference type="ChiTaRS" id="Smg5">
    <property type="organism name" value="mouse"/>
</dbReference>
<dbReference type="PRO" id="PR:Q6ZPY2"/>
<dbReference type="Proteomes" id="UP000000589">
    <property type="component" value="Chromosome 3"/>
</dbReference>
<dbReference type="RNAct" id="Q6ZPY2">
    <property type="molecule type" value="protein"/>
</dbReference>
<dbReference type="Bgee" id="ENSMUSG00000001415">
    <property type="expression patterns" value="Expressed in spermatocyte and 259 other cell types or tissues"/>
</dbReference>
<dbReference type="ExpressionAtlas" id="Q6ZPY2">
    <property type="expression patterns" value="baseline and differential"/>
</dbReference>
<dbReference type="GO" id="GO:0005737">
    <property type="term" value="C:cytoplasm"/>
    <property type="evidence" value="ECO:0000250"/>
    <property type="project" value="HGNC-UCL"/>
</dbReference>
<dbReference type="GO" id="GO:0036464">
    <property type="term" value="C:cytoplasmic ribonucleoprotein granule"/>
    <property type="evidence" value="ECO:0007669"/>
    <property type="project" value="Ensembl"/>
</dbReference>
<dbReference type="GO" id="GO:0005634">
    <property type="term" value="C:nucleus"/>
    <property type="evidence" value="ECO:0000250"/>
    <property type="project" value="HGNC-UCL"/>
</dbReference>
<dbReference type="GO" id="GO:0042826">
    <property type="term" value="F:histone deacetylase binding"/>
    <property type="evidence" value="ECO:0007669"/>
    <property type="project" value="Ensembl"/>
</dbReference>
<dbReference type="GO" id="GO:0051721">
    <property type="term" value="F:protein phosphatase 2A binding"/>
    <property type="evidence" value="ECO:0000250"/>
    <property type="project" value="HGNC-UCL"/>
</dbReference>
<dbReference type="GO" id="GO:0070034">
    <property type="term" value="F:telomerase RNA binding"/>
    <property type="evidence" value="ECO:0007669"/>
    <property type="project" value="Ensembl"/>
</dbReference>
<dbReference type="GO" id="GO:0042162">
    <property type="term" value="F:telomeric DNA binding"/>
    <property type="evidence" value="ECO:0007669"/>
    <property type="project" value="Ensembl"/>
</dbReference>
<dbReference type="GO" id="GO:0031625">
    <property type="term" value="F:ubiquitin protein ligase binding"/>
    <property type="evidence" value="ECO:0007669"/>
    <property type="project" value="Ensembl"/>
</dbReference>
<dbReference type="GO" id="GO:0000184">
    <property type="term" value="P:nuclear-transcribed mRNA catabolic process, nonsense-mediated decay"/>
    <property type="evidence" value="ECO:0007669"/>
    <property type="project" value="UniProtKB-KW"/>
</dbReference>
<dbReference type="GO" id="GO:0035303">
    <property type="term" value="P:regulation of dephosphorylation"/>
    <property type="evidence" value="ECO:0000250"/>
    <property type="project" value="HGNC-UCL"/>
</dbReference>
<dbReference type="GO" id="GO:0032204">
    <property type="term" value="P:regulation of telomere maintenance"/>
    <property type="evidence" value="ECO:0007669"/>
    <property type="project" value="Ensembl"/>
</dbReference>
<dbReference type="CDD" id="cd09884">
    <property type="entry name" value="PIN_Smg5-like"/>
    <property type="match status" value="1"/>
</dbReference>
<dbReference type="FunFam" id="3.40.50.1010:FF:000017">
    <property type="entry name" value="protein SMG5 isoform X2"/>
    <property type="match status" value="1"/>
</dbReference>
<dbReference type="Gene3D" id="3.40.50.1010">
    <property type="entry name" value="5'-nuclease"/>
    <property type="match status" value="1"/>
</dbReference>
<dbReference type="Gene3D" id="1.25.40.10">
    <property type="entry name" value="Tetratricopeptide repeat domain"/>
    <property type="match status" value="1"/>
</dbReference>
<dbReference type="InterPro" id="IPR018834">
    <property type="entry name" value="DNA/RNA-bd_Est1-type"/>
</dbReference>
<dbReference type="InterPro" id="IPR019458">
    <property type="entry name" value="Est1-like_N"/>
</dbReference>
<dbReference type="InterPro" id="IPR045153">
    <property type="entry name" value="Est1/Ebs1-like"/>
</dbReference>
<dbReference type="InterPro" id="IPR002716">
    <property type="entry name" value="PIN_dom"/>
</dbReference>
<dbReference type="InterPro" id="IPR011990">
    <property type="entry name" value="TPR-like_helical_dom_sf"/>
</dbReference>
<dbReference type="PANTHER" id="PTHR15696:SF39">
    <property type="entry name" value="NONSENSE-MEDIATED MRNA DECAY FACTOR SMG5"/>
    <property type="match status" value="1"/>
</dbReference>
<dbReference type="PANTHER" id="PTHR15696">
    <property type="entry name" value="SMG-7 SUPPRESSOR WITH MORPHOLOGICAL EFFECT ON GENITALIA PROTEIN 7"/>
    <property type="match status" value="1"/>
</dbReference>
<dbReference type="Pfam" id="PF10374">
    <property type="entry name" value="EST1"/>
    <property type="match status" value="1"/>
</dbReference>
<dbReference type="Pfam" id="PF10373">
    <property type="entry name" value="EST1_DNA_bind"/>
    <property type="match status" value="2"/>
</dbReference>
<dbReference type="Pfam" id="PF13638">
    <property type="entry name" value="PIN_4"/>
    <property type="match status" value="1"/>
</dbReference>
<dbReference type="SMART" id="SM00670">
    <property type="entry name" value="PINc"/>
    <property type="match status" value="1"/>
</dbReference>
<dbReference type="SUPFAM" id="SSF48452">
    <property type="entry name" value="TPR-like"/>
    <property type="match status" value="1"/>
</dbReference>
<gene>
    <name evidence="8" type="primary">Smg5</name>
    <name evidence="2" type="synonym">Est1b</name>
    <name evidence="8" type="synonym">Kiaa1089</name>
</gene>
<keyword id="KW-0007">Acetylation</keyword>
<keyword id="KW-0025">Alternative splicing</keyword>
<keyword id="KW-0175">Coiled coil</keyword>
<keyword id="KW-0963">Cytoplasm</keyword>
<keyword id="KW-0866">Nonsense-mediated mRNA decay</keyword>
<keyword id="KW-0539">Nucleus</keyword>
<keyword id="KW-0597">Phosphoprotein</keyword>
<keyword id="KW-1185">Reference proteome</keyword>
<protein>
    <recommendedName>
        <fullName evidence="8">Nonsense-mediated mRNA decay factor SMG5</fullName>
    </recommendedName>
    <alternativeName>
        <fullName evidence="2">EST1-like protein B</fullName>
    </alternativeName>
    <alternativeName>
        <fullName evidence="2">LPTS-RP1</fullName>
    </alternativeName>
    <alternativeName>
        <fullName evidence="2">LPTS-interacting protein</fullName>
    </alternativeName>
    <alternativeName>
        <fullName evidence="2">SMG-5 homolog</fullName>
    </alternativeName>
</protein>
<organism>
    <name type="scientific">Mus musculus</name>
    <name type="common">Mouse</name>
    <dbReference type="NCBI Taxonomy" id="10090"/>
    <lineage>
        <taxon>Eukaryota</taxon>
        <taxon>Metazoa</taxon>
        <taxon>Chordata</taxon>
        <taxon>Craniata</taxon>
        <taxon>Vertebrata</taxon>
        <taxon>Euteleostomi</taxon>
        <taxon>Mammalia</taxon>
        <taxon>Eutheria</taxon>
        <taxon>Euarchontoglires</taxon>
        <taxon>Glires</taxon>
        <taxon>Rodentia</taxon>
        <taxon>Myomorpha</taxon>
        <taxon>Muroidea</taxon>
        <taxon>Muridae</taxon>
        <taxon>Murinae</taxon>
        <taxon>Mus</taxon>
        <taxon>Mus</taxon>
    </lineage>
</organism>
<comment type="function">
    <text evidence="1">Plays a role in nonsense-mediated mRNA decay. Does not have RNase activity by itself. Promotes dephosphorylation of UPF1. Together with SMG7 is thought to provide a link to the mRNA degradation machinery involving exonucleolytic pathways, and to serve as an adapter for UPF1 to protein phosphatase 2A (PP2A), thereby triggering UPF1 dephosphorylation. Necessary for TERT activity (By similarity).</text>
</comment>
<comment type="subunit">
    <text>Interacts with TERT, PPP2CA and SMG1. Part of a complex that contains SMG1, SMG5, SMG7, PPP2CA, a short isoform of UPF3A (isoform UPF3AS, but not isoform UPF3AL) and phosphorylated UPF1. Not detected in complexes that contain unphosphorylated UPF1.</text>
</comment>
<comment type="subcellular location">
    <subcellularLocation>
        <location evidence="2">Cytoplasm</location>
    </subcellularLocation>
    <subcellularLocation>
        <location evidence="2">Nucleus</location>
    </subcellularLocation>
    <text evidence="2">Detected in cytoplasmic mRNA decay bodies.</text>
</comment>
<comment type="alternative products">
    <event type="alternative splicing"/>
    <isoform>
        <id>Q6ZPY2-1</id>
        <name>1</name>
        <sequence type="displayed"/>
    </isoform>
    <isoform>
        <id>Q6ZPY2-2</id>
        <name>2</name>
        <sequence type="described" ref="VSP_016590 VSP_016591"/>
    </isoform>
</comment>
<comment type="sequence caution" evidence="7">
    <conflict type="erroneous initiation">
        <sequence resource="EMBL-CDS" id="BAC98096"/>
    </conflict>
</comment>
<reference key="1">
    <citation type="journal article" date="2003" name="DNA Res.">
        <title>Prediction of the coding sequences of mouse homologues of KIAA gene: III. The complete nucleotide sequences of 500 mouse KIAA-homologous cDNAs identified by screening of terminal sequences of cDNA clones randomly sampled from size-fractionated libraries.</title>
        <authorList>
            <person name="Okazaki N."/>
            <person name="Kikuno R."/>
            <person name="Ohara R."/>
            <person name="Inamoto S."/>
            <person name="Koseki H."/>
            <person name="Hiraoka S."/>
            <person name="Saga Y."/>
            <person name="Nagase T."/>
            <person name="Ohara O."/>
            <person name="Koga H."/>
        </authorList>
    </citation>
    <scope>NUCLEOTIDE SEQUENCE [LARGE SCALE MRNA] (ISOFORM 1)</scope>
    <source>
        <tissue>Embryonic tail</tissue>
    </source>
</reference>
<reference key="2">
    <citation type="journal article" date="2004" name="Genome Res.">
        <title>The status, quality, and expansion of the NIH full-length cDNA project: the Mammalian Gene Collection (MGC).</title>
        <authorList>
            <consortium name="The MGC Project Team"/>
        </authorList>
    </citation>
    <scope>NUCLEOTIDE SEQUENCE [LARGE SCALE MRNA] (ISOFORM 2)</scope>
    <scope>VARIANTS ARG-77; LEU-166; GLU-499 AND GLY-503</scope>
    <source>
        <strain>B5/EGFP</strain>
        <strain>Czech II</strain>
        <strain>ICR</strain>
        <tissue>Mammary tumor</tissue>
        <tissue>Trophoblast stem cell</tissue>
    </source>
</reference>
<reference key="3">
    <citation type="journal article" date="2010" name="Cell">
        <title>A tissue-specific atlas of mouse protein phosphorylation and expression.</title>
        <authorList>
            <person name="Huttlin E.L."/>
            <person name="Jedrychowski M.P."/>
            <person name="Elias J.E."/>
            <person name="Goswami T."/>
            <person name="Rad R."/>
            <person name="Beausoleil S.A."/>
            <person name="Villen J."/>
            <person name="Haas W."/>
            <person name="Sowa M.E."/>
            <person name="Gygi S.P."/>
        </authorList>
    </citation>
    <scope>PHOSPHORYLATION [LARGE SCALE ANALYSIS] AT SER-423</scope>
    <scope>IDENTIFICATION BY MASS SPECTROMETRY [LARGE SCALE ANALYSIS]</scope>
    <source>
        <tissue>Lung</tissue>
        <tissue>Spleen</tissue>
    </source>
</reference>
<feature type="initiator methionine" description="Removed" evidence="2">
    <location>
        <position position="1"/>
    </location>
</feature>
<feature type="chain" id="PRO_0000076323" description="Nonsense-mediated mRNA decay factor SMG5">
    <location>
        <begin position="2"/>
        <end position="1017"/>
    </location>
</feature>
<feature type="domain" description="PINc">
    <location>
        <begin position="873"/>
        <end position="996"/>
    </location>
</feature>
<feature type="region of interest" description="Disordered" evidence="4">
    <location>
        <begin position="406"/>
        <end position="562"/>
    </location>
</feature>
<feature type="region of interest" description="Disordered" evidence="4">
    <location>
        <begin position="597"/>
        <end position="640"/>
    </location>
</feature>
<feature type="coiled-coil region" evidence="3">
    <location>
        <begin position="798"/>
        <end position="842"/>
    </location>
</feature>
<feature type="compositionally biased region" description="Basic residues" evidence="4">
    <location>
        <begin position="448"/>
        <end position="467"/>
    </location>
</feature>
<feature type="compositionally biased region" description="Low complexity" evidence="4">
    <location>
        <begin position="486"/>
        <end position="496"/>
    </location>
</feature>
<feature type="compositionally biased region" description="Acidic residues" evidence="4">
    <location>
        <begin position="620"/>
        <end position="629"/>
    </location>
</feature>
<feature type="modified residue" description="N-acetylserine" evidence="2">
    <location>
        <position position="2"/>
    </location>
</feature>
<feature type="modified residue" description="Phosphoserine" evidence="2">
    <location>
        <position position="2"/>
    </location>
</feature>
<feature type="modified residue" description="Phosphoserine" evidence="9">
    <location>
        <position position="423"/>
    </location>
</feature>
<feature type="splice variant" id="VSP_016590" description="In isoform 2." evidence="6">
    <original>ASEDGSESEGSESSNRSCRNERSLQEKLQALMAEGLLPAVKVFLDWLRTNPDLIIVCAQSSQSLWNRLSVLLNLLPASAELQD</original>
    <variation>GAWVHESPPSRRVTSPLGFCCHCGILVLCTYSFPASRTFAVLLLSTADCSSFTLFSPHIGGCTSFPHGIQLPEGSQKLGIMFL</variation>
    <location>
        <begin position="620"/>
        <end position="702"/>
    </location>
</feature>
<feature type="splice variant" id="VSP_016591" description="In isoform 2." evidence="6">
    <location>
        <begin position="703"/>
        <end position="1017"/>
    </location>
</feature>
<feature type="sequence variant" description="In strain: B5/EGFP." evidence="5">
    <original>K</original>
    <variation>R</variation>
    <location>
        <position position="77"/>
    </location>
</feature>
<feature type="sequence variant" description="In strain: Czech II." evidence="5">
    <original>W</original>
    <variation>L</variation>
    <location>
        <position position="166"/>
    </location>
</feature>
<feature type="sequence variant" description="In strain: Czech II." evidence="5">
    <original>D</original>
    <variation>E</variation>
    <location>
        <position position="499"/>
    </location>
</feature>
<feature type="sequence variant" description="In strain: Czech II." evidence="5">
    <original>E</original>
    <variation>G</variation>
    <location>
        <position position="503"/>
    </location>
</feature>
<evidence type="ECO:0000250" key="1"/>
<evidence type="ECO:0000250" key="2">
    <source>
        <dbReference type="UniProtKB" id="Q9UPR3"/>
    </source>
</evidence>
<evidence type="ECO:0000255" key="3"/>
<evidence type="ECO:0000256" key="4">
    <source>
        <dbReference type="SAM" id="MobiDB-lite"/>
    </source>
</evidence>
<evidence type="ECO:0000269" key="5">
    <source>
    </source>
</evidence>
<evidence type="ECO:0000303" key="6">
    <source>
    </source>
</evidence>
<evidence type="ECO:0000305" key="7"/>
<evidence type="ECO:0000312" key="8">
    <source>
        <dbReference type="MGI" id="MGI:2447364"/>
    </source>
</evidence>
<evidence type="ECO:0007744" key="9">
    <source>
    </source>
</evidence>
<name>SMG5_MOUSE</name>
<accession>Q6ZPY2</accession>
<accession>Q497S2</accession>
<accession>Q8R3S4</accession>